<name>E135_ARATH</name>
<feature type="signal peptide" evidence="3">
    <location>
        <begin position="1"/>
        <end position="26"/>
    </location>
</feature>
<feature type="chain" id="PRO_0000011890" description="Glucan endo-1,3-beta-glucosidase 5">
    <location>
        <begin position="27"/>
        <end position="460"/>
    </location>
</feature>
<feature type="propeptide" id="PRO_0000011891" description="Removed in mature form" evidence="3">
    <location>
        <begin position="461"/>
        <end position="484"/>
    </location>
</feature>
<feature type="active site" description="Proton donor" evidence="2">
    <location>
        <position position="122"/>
    </location>
</feature>
<feature type="active site" description="Nucleophile" evidence="2">
    <location>
        <position position="267"/>
    </location>
</feature>
<feature type="lipid moiety-binding region" description="GPI-anchor amidated alanine" evidence="3">
    <location>
        <position position="460"/>
    </location>
</feature>
<feature type="glycosylation site" description="N-linked (GlcNAc...) asparagine" evidence="3">
    <location>
        <position position="102"/>
    </location>
</feature>
<feature type="glycosylation site" description="N-linked (GlcNAc...) asparagine" evidence="3">
    <location>
        <position position="129"/>
    </location>
</feature>
<feature type="glycosylation site" description="N-linked (GlcNAc...) asparagine" evidence="3">
    <location>
        <position position="260"/>
    </location>
</feature>
<feature type="glycosylation site" description="N-linked (GlcNAc...) asparagine" evidence="3">
    <location>
        <position position="409"/>
    </location>
</feature>
<feature type="disulfide bond" evidence="1">
    <location>
        <begin position="366"/>
        <end position="428"/>
    </location>
</feature>
<keyword id="KW-1003">Cell membrane</keyword>
<keyword id="KW-1015">Disulfide bond</keyword>
<keyword id="KW-0325">Glycoprotein</keyword>
<keyword id="KW-0326">Glycosidase</keyword>
<keyword id="KW-0336">GPI-anchor</keyword>
<keyword id="KW-0378">Hydrolase</keyword>
<keyword id="KW-0449">Lipoprotein</keyword>
<keyword id="KW-0472">Membrane</keyword>
<keyword id="KW-0611">Plant defense</keyword>
<keyword id="KW-1185">Reference proteome</keyword>
<keyword id="KW-0732">Signal</keyword>
<dbReference type="EC" id="3.2.1.39"/>
<dbReference type="EMBL" id="AL161578">
    <property type="protein sequence ID" value="CAB79832.1"/>
    <property type="molecule type" value="Genomic_DNA"/>
</dbReference>
<dbReference type="EMBL" id="CP002687">
    <property type="protein sequence ID" value="AEE85864.1"/>
    <property type="molecule type" value="Genomic_DNA"/>
</dbReference>
<dbReference type="EMBL" id="AK229398">
    <property type="protein sequence ID" value="BAF01260.1"/>
    <property type="molecule type" value="mRNA"/>
</dbReference>
<dbReference type="PIR" id="T10668">
    <property type="entry name" value="T10668"/>
</dbReference>
<dbReference type="RefSeq" id="NP_194843.1">
    <property type="nucleotide sequence ID" value="NM_119264.5"/>
</dbReference>
<dbReference type="SMR" id="Q9M088"/>
<dbReference type="FunCoup" id="Q9M088">
    <property type="interactions" value="212"/>
</dbReference>
<dbReference type="STRING" id="3702.Q9M088"/>
<dbReference type="CAZy" id="CBM43">
    <property type="family name" value="Carbohydrate-Binding Module Family 43"/>
</dbReference>
<dbReference type="CAZy" id="GH17">
    <property type="family name" value="Glycoside Hydrolase Family 17"/>
</dbReference>
<dbReference type="GlyGen" id="Q9M088">
    <property type="glycosylation" value="4 sites"/>
</dbReference>
<dbReference type="PaxDb" id="3702-AT4G31140.1"/>
<dbReference type="ProteomicsDB" id="222027"/>
<dbReference type="EnsemblPlants" id="AT4G31140.1">
    <property type="protein sequence ID" value="AT4G31140.1"/>
    <property type="gene ID" value="AT4G31140"/>
</dbReference>
<dbReference type="GeneID" id="829242"/>
<dbReference type="Gramene" id="AT4G31140.1">
    <property type="protein sequence ID" value="AT4G31140.1"/>
    <property type="gene ID" value="AT4G31140"/>
</dbReference>
<dbReference type="KEGG" id="ath:AT4G31140"/>
<dbReference type="Araport" id="AT4G31140"/>
<dbReference type="TAIR" id="AT4G31140"/>
<dbReference type="eggNOG" id="ENOG502QPZ6">
    <property type="taxonomic scope" value="Eukaryota"/>
</dbReference>
<dbReference type="HOGENOM" id="CLU_024953_2_0_1"/>
<dbReference type="InParanoid" id="Q9M088"/>
<dbReference type="OMA" id="TYLQRRW"/>
<dbReference type="PhylomeDB" id="Q9M088"/>
<dbReference type="BioCyc" id="ARA:AT4G31140-MONOMER"/>
<dbReference type="PRO" id="PR:Q9M088"/>
<dbReference type="Proteomes" id="UP000006548">
    <property type="component" value="Chromosome 4"/>
</dbReference>
<dbReference type="ExpressionAtlas" id="Q9M088">
    <property type="expression patterns" value="baseline and differential"/>
</dbReference>
<dbReference type="GO" id="GO:0005886">
    <property type="term" value="C:plasma membrane"/>
    <property type="evidence" value="ECO:0007005"/>
    <property type="project" value="TAIR"/>
</dbReference>
<dbReference type="GO" id="GO:0009506">
    <property type="term" value="C:plasmodesma"/>
    <property type="evidence" value="ECO:0007005"/>
    <property type="project" value="TAIR"/>
</dbReference>
<dbReference type="GO" id="GO:0098552">
    <property type="term" value="C:side of membrane"/>
    <property type="evidence" value="ECO:0007669"/>
    <property type="project" value="UniProtKB-KW"/>
</dbReference>
<dbReference type="GO" id="GO:0005773">
    <property type="term" value="C:vacuole"/>
    <property type="evidence" value="ECO:0007005"/>
    <property type="project" value="TAIR"/>
</dbReference>
<dbReference type="GO" id="GO:0042973">
    <property type="term" value="F:glucan endo-1,3-beta-D-glucosidase activity"/>
    <property type="evidence" value="ECO:0007669"/>
    <property type="project" value="UniProtKB-EC"/>
</dbReference>
<dbReference type="GO" id="GO:0005975">
    <property type="term" value="P:carbohydrate metabolic process"/>
    <property type="evidence" value="ECO:0007669"/>
    <property type="project" value="InterPro"/>
</dbReference>
<dbReference type="GO" id="GO:0006952">
    <property type="term" value="P:defense response"/>
    <property type="evidence" value="ECO:0007669"/>
    <property type="project" value="UniProtKB-KW"/>
</dbReference>
<dbReference type="FunFam" id="3.20.20.80:FF:000008">
    <property type="entry name" value="Glucan endo-1,3-beta-glucosidase 5"/>
    <property type="match status" value="1"/>
</dbReference>
<dbReference type="FunFam" id="1.20.58.1040:FF:000002">
    <property type="entry name" value="Glucan endo-1,3-beta-glucosidase 8"/>
    <property type="match status" value="1"/>
</dbReference>
<dbReference type="Gene3D" id="1.20.58.1040">
    <property type="match status" value="1"/>
</dbReference>
<dbReference type="Gene3D" id="3.20.20.80">
    <property type="entry name" value="Glycosidases"/>
    <property type="match status" value="1"/>
</dbReference>
<dbReference type="InterPro" id="IPR000490">
    <property type="entry name" value="Glyco_hydro_17"/>
</dbReference>
<dbReference type="InterPro" id="IPR044965">
    <property type="entry name" value="Glyco_hydro_17_plant"/>
</dbReference>
<dbReference type="InterPro" id="IPR017853">
    <property type="entry name" value="Glycoside_hydrolase_SF"/>
</dbReference>
<dbReference type="InterPro" id="IPR012946">
    <property type="entry name" value="X8"/>
</dbReference>
<dbReference type="PANTHER" id="PTHR32227">
    <property type="entry name" value="GLUCAN ENDO-1,3-BETA-GLUCOSIDASE BG1-RELATED-RELATED"/>
    <property type="match status" value="1"/>
</dbReference>
<dbReference type="Pfam" id="PF00332">
    <property type="entry name" value="Glyco_hydro_17"/>
    <property type="match status" value="1"/>
</dbReference>
<dbReference type="Pfam" id="PF07983">
    <property type="entry name" value="X8"/>
    <property type="match status" value="1"/>
</dbReference>
<dbReference type="SMART" id="SM00768">
    <property type="entry name" value="X8"/>
    <property type="match status" value="1"/>
</dbReference>
<dbReference type="SUPFAM" id="SSF51445">
    <property type="entry name" value="(Trans)glycosidases"/>
    <property type="match status" value="1"/>
</dbReference>
<dbReference type="PROSITE" id="PS00587">
    <property type="entry name" value="GLYCOSYL_HYDROL_F17"/>
    <property type="match status" value="1"/>
</dbReference>
<sequence>MLFKGVFAVFFVITLLYASLLIEVEGIGVNWGSQARHPLPPATVVRLLRENGIQKVKLFEADSAILKALSRTGIQVMVGIPNDLLAPLAGSVAAAERWVSQNVSAHVSSNGVDIRYVAVGNEPFLKAFNGTFEGITLPALQNIQSAIIKAGLATQVKVTVPLNADVYQSASNLPSDGDFRPEIRDLMLNIVKFLSDNGAPFTINIYPFISLYNDPNFPVEFAFFDGTGTPINDNGRIYDNVLDANYDTLVWSLQKNGFGNLTIIVGEVGWPTDGDKNANLMYARRYNQGFMNRQKANKGTPMRPGAMDAYLFGLIDEDAKSIQPGNFERHWGIFYIDGQPKYQLSLGSGNGLIPAKDVHYLAKKWCILAPNANLQDPQLGPSVSYACDHADCTSLGYGSSCGNLNLAQNVSYAFNSYYQVSNQLDSACKFPGLSIVSTRDPSVGSCKFKIMIKSEDASEASAMMPITRSTAVLLLLSICLYIVL</sequence>
<accession>Q9M088</accession>
<accession>Q0WNN9</accession>
<organism>
    <name type="scientific">Arabidopsis thaliana</name>
    <name type="common">Mouse-ear cress</name>
    <dbReference type="NCBI Taxonomy" id="3702"/>
    <lineage>
        <taxon>Eukaryota</taxon>
        <taxon>Viridiplantae</taxon>
        <taxon>Streptophyta</taxon>
        <taxon>Embryophyta</taxon>
        <taxon>Tracheophyta</taxon>
        <taxon>Spermatophyta</taxon>
        <taxon>Magnoliopsida</taxon>
        <taxon>eudicotyledons</taxon>
        <taxon>Gunneridae</taxon>
        <taxon>Pentapetalae</taxon>
        <taxon>rosids</taxon>
        <taxon>malvids</taxon>
        <taxon>Brassicales</taxon>
        <taxon>Brassicaceae</taxon>
        <taxon>Camelineae</taxon>
        <taxon>Arabidopsis</taxon>
    </lineage>
</organism>
<reference key="1">
    <citation type="journal article" date="1999" name="Nature">
        <title>Sequence and analysis of chromosome 4 of the plant Arabidopsis thaliana.</title>
        <authorList>
            <person name="Mayer K.F.X."/>
            <person name="Schueller C."/>
            <person name="Wambutt R."/>
            <person name="Murphy G."/>
            <person name="Volckaert G."/>
            <person name="Pohl T."/>
            <person name="Duesterhoeft A."/>
            <person name="Stiekema W."/>
            <person name="Entian K.-D."/>
            <person name="Terryn N."/>
            <person name="Harris B."/>
            <person name="Ansorge W."/>
            <person name="Brandt P."/>
            <person name="Grivell L.A."/>
            <person name="Rieger M."/>
            <person name="Weichselgartner M."/>
            <person name="de Simone V."/>
            <person name="Obermaier B."/>
            <person name="Mache R."/>
            <person name="Mueller M."/>
            <person name="Kreis M."/>
            <person name="Delseny M."/>
            <person name="Puigdomenech P."/>
            <person name="Watson M."/>
            <person name="Schmidtheini T."/>
            <person name="Reichert B."/>
            <person name="Portetelle D."/>
            <person name="Perez-Alonso M."/>
            <person name="Boutry M."/>
            <person name="Bancroft I."/>
            <person name="Vos P."/>
            <person name="Hoheisel J."/>
            <person name="Zimmermann W."/>
            <person name="Wedler H."/>
            <person name="Ridley P."/>
            <person name="Langham S.-A."/>
            <person name="McCullagh B."/>
            <person name="Bilham L."/>
            <person name="Robben J."/>
            <person name="van der Schueren J."/>
            <person name="Grymonprez B."/>
            <person name="Chuang Y.-J."/>
            <person name="Vandenbussche F."/>
            <person name="Braeken M."/>
            <person name="Weltjens I."/>
            <person name="Voet M."/>
            <person name="Bastiaens I."/>
            <person name="Aert R."/>
            <person name="Defoor E."/>
            <person name="Weitzenegger T."/>
            <person name="Bothe G."/>
            <person name="Ramsperger U."/>
            <person name="Hilbert H."/>
            <person name="Braun M."/>
            <person name="Holzer E."/>
            <person name="Brandt A."/>
            <person name="Peters S."/>
            <person name="van Staveren M."/>
            <person name="Dirkse W."/>
            <person name="Mooijman P."/>
            <person name="Klein Lankhorst R."/>
            <person name="Rose M."/>
            <person name="Hauf J."/>
            <person name="Koetter P."/>
            <person name="Berneiser S."/>
            <person name="Hempel S."/>
            <person name="Feldpausch M."/>
            <person name="Lamberth S."/>
            <person name="Van den Daele H."/>
            <person name="De Keyser A."/>
            <person name="Buysshaert C."/>
            <person name="Gielen J."/>
            <person name="Villarroel R."/>
            <person name="De Clercq R."/>
            <person name="van Montagu M."/>
            <person name="Rogers J."/>
            <person name="Cronin A."/>
            <person name="Quail M.A."/>
            <person name="Bray-Allen S."/>
            <person name="Clark L."/>
            <person name="Doggett J."/>
            <person name="Hall S."/>
            <person name="Kay M."/>
            <person name="Lennard N."/>
            <person name="McLay K."/>
            <person name="Mayes R."/>
            <person name="Pettett A."/>
            <person name="Rajandream M.A."/>
            <person name="Lyne M."/>
            <person name="Benes V."/>
            <person name="Rechmann S."/>
            <person name="Borkova D."/>
            <person name="Bloecker H."/>
            <person name="Scharfe M."/>
            <person name="Grimm M."/>
            <person name="Loehnert T.-H."/>
            <person name="Dose S."/>
            <person name="de Haan M."/>
            <person name="Maarse A.C."/>
            <person name="Schaefer M."/>
            <person name="Mueller-Auer S."/>
            <person name="Gabel C."/>
            <person name="Fuchs M."/>
            <person name="Fartmann B."/>
            <person name="Granderath K."/>
            <person name="Dauner D."/>
            <person name="Herzl A."/>
            <person name="Neumann S."/>
            <person name="Argiriou A."/>
            <person name="Vitale D."/>
            <person name="Liguori R."/>
            <person name="Piravandi E."/>
            <person name="Massenet O."/>
            <person name="Quigley F."/>
            <person name="Clabauld G."/>
            <person name="Muendlein A."/>
            <person name="Felber R."/>
            <person name="Schnabl S."/>
            <person name="Hiller R."/>
            <person name="Schmidt W."/>
            <person name="Lecharny A."/>
            <person name="Aubourg S."/>
            <person name="Chefdor F."/>
            <person name="Cooke R."/>
            <person name="Berger C."/>
            <person name="Monfort A."/>
            <person name="Casacuberta E."/>
            <person name="Gibbons T."/>
            <person name="Weber N."/>
            <person name="Vandenbol M."/>
            <person name="Bargues M."/>
            <person name="Terol J."/>
            <person name="Torres A."/>
            <person name="Perez-Perez A."/>
            <person name="Purnelle B."/>
            <person name="Bent E."/>
            <person name="Johnson S."/>
            <person name="Tacon D."/>
            <person name="Jesse T."/>
            <person name="Heijnen L."/>
            <person name="Schwarz S."/>
            <person name="Scholler P."/>
            <person name="Heber S."/>
            <person name="Francs P."/>
            <person name="Bielke C."/>
            <person name="Frishman D."/>
            <person name="Haase D."/>
            <person name="Lemcke K."/>
            <person name="Mewes H.-W."/>
            <person name="Stocker S."/>
            <person name="Zaccaria P."/>
            <person name="Bevan M."/>
            <person name="Wilson R.K."/>
            <person name="de la Bastide M."/>
            <person name="Habermann K."/>
            <person name="Parnell L."/>
            <person name="Dedhia N."/>
            <person name="Gnoj L."/>
            <person name="Schutz K."/>
            <person name="Huang E."/>
            <person name="Spiegel L."/>
            <person name="Sekhon M."/>
            <person name="Murray J."/>
            <person name="Sheet P."/>
            <person name="Cordes M."/>
            <person name="Abu-Threideh J."/>
            <person name="Stoneking T."/>
            <person name="Kalicki J."/>
            <person name="Graves T."/>
            <person name="Harmon G."/>
            <person name="Edwards J."/>
            <person name="Latreille P."/>
            <person name="Courtney L."/>
            <person name="Cloud J."/>
            <person name="Abbott A."/>
            <person name="Scott K."/>
            <person name="Johnson D."/>
            <person name="Minx P."/>
            <person name="Bentley D."/>
            <person name="Fulton B."/>
            <person name="Miller N."/>
            <person name="Greco T."/>
            <person name="Kemp K."/>
            <person name="Kramer J."/>
            <person name="Fulton L."/>
            <person name="Mardis E."/>
            <person name="Dante M."/>
            <person name="Pepin K."/>
            <person name="Hillier L.W."/>
            <person name="Nelson J."/>
            <person name="Spieth J."/>
            <person name="Ryan E."/>
            <person name="Andrews S."/>
            <person name="Geisel C."/>
            <person name="Layman D."/>
            <person name="Du H."/>
            <person name="Ali J."/>
            <person name="Berghoff A."/>
            <person name="Jones K."/>
            <person name="Drone K."/>
            <person name="Cotton M."/>
            <person name="Joshu C."/>
            <person name="Antonoiu B."/>
            <person name="Zidanic M."/>
            <person name="Strong C."/>
            <person name="Sun H."/>
            <person name="Lamar B."/>
            <person name="Yordan C."/>
            <person name="Ma P."/>
            <person name="Zhong J."/>
            <person name="Preston R."/>
            <person name="Vil D."/>
            <person name="Shekher M."/>
            <person name="Matero A."/>
            <person name="Shah R."/>
            <person name="Swaby I.K."/>
            <person name="O'Shaughnessy A."/>
            <person name="Rodriguez M."/>
            <person name="Hoffman J."/>
            <person name="Till S."/>
            <person name="Granat S."/>
            <person name="Shohdy N."/>
            <person name="Hasegawa A."/>
            <person name="Hameed A."/>
            <person name="Lodhi M."/>
            <person name="Johnson A."/>
            <person name="Chen E."/>
            <person name="Marra M.A."/>
            <person name="Martienssen R."/>
            <person name="McCombie W.R."/>
        </authorList>
    </citation>
    <scope>NUCLEOTIDE SEQUENCE [LARGE SCALE GENOMIC DNA]</scope>
    <source>
        <strain>cv. Columbia</strain>
    </source>
</reference>
<reference key="2">
    <citation type="journal article" date="2017" name="Plant J.">
        <title>Araport11: a complete reannotation of the Arabidopsis thaliana reference genome.</title>
        <authorList>
            <person name="Cheng C.Y."/>
            <person name="Krishnakumar V."/>
            <person name="Chan A.P."/>
            <person name="Thibaud-Nissen F."/>
            <person name="Schobel S."/>
            <person name="Town C.D."/>
        </authorList>
    </citation>
    <scope>GENOME REANNOTATION</scope>
    <source>
        <strain>cv. Columbia</strain>
    </source>
</reference>
<reference key="3">
    <citation type="submission" date="2006-07" db="EMBL/GenBank/DDBJ databases">
        <title>Large-scale analysis of RIKEN Arabidopsis full-length (RAFL) cDNAs.</title>
        <authorList>
            <person name="Totoki Y."/>
            <person name="Seki M."/>
            <person name="Ishida J."/>
            <person name="Nakajima M."/>
            <person name="Enju A."/>
            <person name="Kamiya A."/>
            <person name="Narusaka M."/>
            <person name="Shin-i T."/>
            <person name="Nakagawa M."/>
            <person name="Sakamoto N."/>
            <person name="Oishi K."/>
            <person name="Kohara Y."/>
            <person name="Kobayashi M."/>
            <person name="Toyoda A."/>
            <person name="Sakaki Y."/>
            <person name="Sakurai T."/>
            <person name="Iida K."/>
            <person name="Akiyama K."/>
            <person name="Satou M."/>
            <person name="Toyoda T."/>
            <person name="Konagaya A."/>
            <person name="Carninci P."/>
            <person name="Kawai J."/>
            <person name="Hayashizaki Y."/>
            <person name="Shinozaki K."/>
        </authorList>
    </citation>
    <scope>NUCLEOTIDE SEQUENCE [LARGE SCALE MRNA]</scope>
    <source>
        <strain>cv. Columbia</strain>
    </source>
</reference>
<evidence type="ECO:0000250" key="1"/>
<evidence type="ECO:0000250" key="2">
    <source>
        <dbReference type="UniProtKB" id="O22317"/>
    </source>
</evidence>
<evidence type="ECO:0000255" key="3"/>
<evidence type="ECO:0000305" key="4"/>
<proteinExistence type="evidence at transcript level"/>
<comment type="catalytic activity">
    <reaction>
        <text>Hydrolysis of (1-&gt;3)-beta-D-glucosidic linkages in (1-&gt;3)-beta-D-glucans.</text>
        <dbReference type="EC" id="3.2.1.39"/>
    </reaction>
</comment>
<comment type="subcellular location">
    <subcellularLocation>
        <location>Cell membrane</location>
        <topology>Lipid-anchor</topology>
        <topology>GPI-anchor</topology>
    </subcellularLocation>
</comment>
<comment type="PTM">
    <text evidence="1">Contains two additional disulfide bonds.</text>
</comment>
<comment type="similarity">
    <text evidence="4">Belongs to the glycosyl hydrolase 17 family.</text>
</comment>
<gene>
    <name type="ordered locus">At4g31140</name>
    <name type="ORF">F6E21.60</name>
</gene>
<protein>
    <recommendedName>
        <fullName>Glucan endo-1,3-beta-glucosidase 5</fullName>
        <ecNumber>3.2.1.39</ecNumber>
    </recommendedName>
    <alternativeName>
        <fullName>(1-&gt;3)-beta-glucan endohydrolase 5</fullName>
        <shortName>(1-&gt;3)-beta-glucanase 5</shortName>
    </alternativeName>
    <alternativeName>
        <fullName>Beta-1,3-endoglucanase 5</fullName>
        <shortName>Beta-1,3-glucanase 5</shortName>
    </alternativeName>
</protein>